<feature type="chain" id="PRO_0000334571" description="Serpin-Z2A">
    <location>
        <begin position="1"/>
        <end position="398"/>
    </location>
</feature>
<feature type="region of interest" description="RCL">
    <location>
        <begin position="343"/>
        <end position="367"/>
    </location>
</feature>
<feature type="site" description="Reactive bond">
    <location>
        <begin position="357"/>
        <end position="358"/>
    </location>
</feature>
<sequence length="398" mass="43311">MATTLATDVRLSIAHQTRFGFRLASTISSNPESTANNVAFSPVSLHVALSLITAGAGGATRDQLVATLGEGEAERLHALAEQVVQFVLADASYADSPRVTFANGVFVDASLPLKPSFQELAVCKYKAEAQSVDFQTKAAEVTAQVNSWVEKVTTGLIKDILPAGSISNTTRLVLGNALYFKGAWTDQFDSRVTKSDYFYLLDGSSIQTPFMYSSEEQYISSSDGLKVLKLPYKQGGDKRQFSMYILLPEAPSGIWSLAEKLSAEPELLERHIPRQKVALRQFKLPKFKISFGIEASDLLKHLGLQLPFSDEADLSEMVDSPMPQGLRISSVFHKTFVEVNETGTEAAAATIAKAVLLSASPPSDMDFIADHPFLFLIREDTSGVVLFIGHVVNPLRSL</sequence>
<proteinExistence type="evidence at protein level"/>
<protein>
    <recommendedName>
        <fullName>Serpin-Z2A</fullName>
    </recommendedName>
    <alternativeName>
        <fullName>TriaeZ2a</fullName>
    </alternativeName>
    <alternativeName>
        <fullName>WSZ2a</fullName>
    </alternativeName>
</protein>
<evidence type="ECO:0000250" key="1"/>
<evidence type="ECO:0000269" key="2">
    <source>
    </source>
</evidence>
<evidence type="ECO:0000305" key="3"/>
<reference key="1">
    <citation type="journal article" date="2000" name="J. Biol. Chem.">
        <title>Inhibitory serpins from wheat grain with reactive centers resembling glutamine-rich repeats of prolamin storage proteins. Cloning and characterization of five major molecular forms.</title>
        <authorList>
            <person name="Oestergaard H."/>
            <person name="Rasmussen S.K."/>
            <person name="Roberts T.H."/>
            <person name="Hejgaard J."/>
        </authorList>
    </citation>
    <scope>NUCLEOTIDE SEQUENCE [MRNA]</scope>
    <scope>PARTIAL PROTEIN SEQUENCE</scope>
    <scope>FUNCTION</scope>
    <source>
        <strain>cv. Chinese Spring</strain>
        <tissue>Grain</tissue>
    </source>
</reference>
<name>SPZ2A_WHEAT</name>
<dbReference type="EMBL" id="AJ245879">
    <property type="protein sequence ID" value="CAB52710.1"/>
    <property type="molecule type" value="mRNA"/>
</dbReference>
<dbReference type="RefSeq" id="NP_001414910.1">
    <property type="nucleotide sequence ID" value="NM_001427981.1"/>
</dbReference>
<dbReference type="SMR" id="Q9ST57"/>
<dbReference type="STRING" id="4565.Q9ST57"/>
<dbReference type="Allergome" id="5724">
    <property type="allergen name" value="Tri a 33"/>
</dbReference>
<dbReference type="Allergome" id="9500">
    <property type="allergen name" value="Tri a 33.0101"/>
</dbReference>
<dbReference type="MEROPS" id="I04.032"/>
<dbReference type="PaxDb" id="4565-Traes_5BL_22ED571AE.1"/>
<dbReference type="EnsemblPlants" id="TraesCS5B02G419900.1">
    <property type="protein sequence ID" value="TraesCS5B02G419900.1"/>
    <property type="gene ID" value="TraesCS5B02G419900"/>
</dbReference>
<dbReference type="EnsemblPlants" id="TraesCS5B03G1035800.1">
    <property type="protein sequence ID" value="TraesCS5B03G1035800.1.CDS"/>
    <property type="gene ID" value="TraesCS5B03G1035800"/>
</dbReference>
<dbReference type="EnsemblPlants" id="TraesNOR5B03G02999710.1">
    <property type="protein sequence ID" value="TraesNOR5B03G02999710.1"/>
    <property type="gene ID" value="TraesNOR5B03G02999710"/>
</dbReference>
<dbReference type="GeneID" id="543376"/>
<dbReference type="Gramene" id="TraesCS5B02G419900.1">
    <property type="protein sequence ID" value="TraesCS5B02G419900.1"/>
    <property type="gene ID" value="TraesCS5B02G419900"/>
</dbReference>
<dbReference type="Gramene" id="TraesCS5B03G1035800.1">
    <property type="protein sequence ID" value="TraesCS5B03G1035800.1.CDS"/>
    <property type="gene ID" value="TraesCS5B03G1035800"/>
</dbReference>
<dbReference type="Gramene" id="TraesNOR5B03G02999710.1">
    <property type="protein sequence ID" value="TraesNOR5B03G02999710.1"/>
    <property type="gene ID" value="TraesNOR5B03G02999710"/>
</dbReference>
<dbReference type="eggNOG" id="KOG2392">
    <property type="taxonomic scope" value="Eukaryota"/>
</dbReference>
<dbReference type="HOGENOM" id="CLU_023330_4_0_1"/>
<dbReference type="OMA" id="CYFGKLL"/>
<dbReference type="OrthoDB" id="1063785at2759"/>
<dbReference type="Proteomes" id="UP000019116">
    <property type="component" value="Chromosome 5B"/>
</dbReference>
<dbReference type="GO" id="GO:0005615">
    <property type="term" value="C:extracellular space"/>
    <property type="evidence" value="ECO:0000318"/>
    <property type="project" value="GO_Central"/>
</dbReference>
<dbReference type="GO" id="GO:0004867">
    <property type="term" value="F:serine-type endopeptidase inhibitor activity"/>
    <property type="evidence" value="ECO:0007669"/>
    <property type="project" value="UniProtKB-KW"/>
</dbReference>
<dbReference type="CDD" id="cd02043">
    <property type="entry name" value="serpinP_plants"/>
    <property type="match status" value="1"/>
</dbReference>
<dbReference type="Gene3D" id="2.30.39.10">
    <property type="entry name" value="Alpha-1-antitrypsin, domain 1"/>
    <property type="match status" value="1"/>
</dbReference>
<dbReference type="Gene3D" id="3.30.497.10">
    <property type="entry name" value="Antithrombin, subunit I, domain 2"/>
    <property type="match status" value="1"/>
</dbReference>
<dbReference type="InterPro" id="IPR023795">
    <property type="entry name" value="Serpin_CS"/>
</dbReference>
<dbReference type="InterPro" id="IPR023796">
    <property type="entry name" value="Serpin_dom"/>
</dbReference>
<dbReference type="InterPro" id="IPR000215">
    <property type="entry name" value="Serpin_fam"/>
</dbReference>
<dbReference type="InterPro" id="IPR036186">
    <property type="entry name" value="Serpin_sf"/>
</dbReference>
<dbReference type="InterPro" id="IPR042178">
    <property type="entry name" value="Serpin_sf_1"/>
</dbReference>
<dbReference type="InterPro" id="IPR042185">
    <property type="entry name" value="Serpin_sf_2"/>
</dbReference>
<dbReference type="PANTHER" id="PTHR11461">
    <property type="entry name" value="SERINE PROTEASE INHIBITOR, SERPIN"/>
    <property type="match status" value="1"/>
</dbReference>
<dbReference type="PANTHER" id="PTHR11461:SF317">
    <property type="entry name" value="SERPIN-Z1C"/>
    <property type="match status" value="1"/>
</dbReference>
<dbReference type="Pfam" id="PF00079">
    <property type="entry name" value="Serpin"/>
    <property type="match status" value="1"/>
</dbReference>
<dbReference type="SMART" id="SM00093">
    <property type="entry name" value="SERPIN"/>
    <property type="match status" value="1"/>
</dbReference>
<dbReference type="SUPFAM" id="SSF56574">
    <property type="entry name" value="Serpins"/>
    <property type="match status" value="1"/>
</dbReference>
<dbReference type="PROSITE" id="PS00284">
    <property type="entry name" value="SERPIN"/>
    <property type="match status" value="1"/>
</dbReference>
<comment type="function">
    <text evidence="2">Inhibits chymotrypsin and cathepsin G in vitro.</text>
</comment>
<comment type="domain">
    <text evidence="1">The reactive center loop (RCL) extends out from the body of the protein and directs binding to the target protease. The protease cleaves the serpin at the reactive site within the RCL, establishing a covalent linkage between the carboxyl group of the serpin reactive site and the serine hydroxyl of the protease. The resulting inactive serpin-protease complex is highly stable (By similarity).</text>
</comment>
<comment type="similarity">
    <text evidence="3">Belongs to the serpin family.</text>
</comment>
<keyword id="KW-0903">Direct protein sequencing</keyword>
<keyword id="KW-0646">Protease inhibitor</keyword>
<keyword id="KW-1185">Reference proteome</keyword>
<keyword id="KW-0722">Serine protease inhibitor</keyword>
<organism>
    <name type="scientific">Triticum aestivum</name>
    <name type="common">Wheat</name>
    <dbReference type="NCBI Taxonomy" id="4565"/>
    <lineage>
        <taxon>Eukaryota</taxon>
        <taxon>Viridiplantae</taxon>
        <taxon>Streptophyta</taxon>
        <taxon>Embryophyta</taxon>
        <taxon>Tracheophyta</taxon>
        <taxon>Spermatophyta</taxon>
        <taxon>Magnoliopsida</taxon>
        <taxon>Liliopsida</taxon>
        <taxon>Poales</taxon>
        <taxon>Poaceae</taxon>
        <taxon>BOP clade</taxon>
        <taxon>Pooideae</taxon>
        <taxon>Triticodae</taxon>
        <taxon>Triticeae</taxon>
        <taxon>Triticinae</taxon>
        <taxon>Triticum</taxon>
    </lineage>
</organism>
<accession>Q9ST57</accession>